<proteinExistence type="inferred from homology"/>
<name>OBG_WIGBR</name>
<feature type="chain" id="PRO_0000386386" description="GTPase Obg">
    <location>
        <begin position="1"/>
        <end position="337"/>
    </location>
</feature>
<feature type="domain" description="Obg" evidence="2">
    <location>
        <begin position="1"/>
        <end position="161"/>
    </location>
</feature>
<feature type="domain" description="OBG-type G" evidence="1">
    <location>
        <begin position="162"/>
        <end position="333"/>
    </location>
</feature>
<feature type="binding site" evidence="1">
    <location>
        <begin position="168"/>
        <end position="175"/>
    </location>
    <ligand>
        <name>GTP</name>
        <dbReference type="ChEBI" id="CHEBI:37565"/>
    </ligand>
</feature>
<feature type="binding site" evidence="1">
    <location>
        <position position="175"/>
    </location>
    <ligand>
        <name>Mg(2+)</name>
        <dbReference type="ChEBI" id="CHEBI:18420"/>
    </ligand>
</feature>
<feature type="binding site" evidence="1">
    <location>
        <begin position="193"/>
        <end position="197"/>
    </location>
    <ligand>
        <name>GTP</name>
        <dbReference type="ChEBI" id="CHEBI:37565"/>
    </ligand>
</feature>
<feature type="binding site" evidence="1">
    <location>
        <position position="195"/>
    </location>
    <ligand>
        <name>Mg(2+)</name>
        <dbReference type="ChEBI" id="CHEBI:18420"/>
    </ligand>
</feature>
<feature type="binding site" evidence="1">
    <location>
        <begin position="214"/>
        <end position="217"/>
    </location>
    <ligand>
        <name>GTP</name>
        <dbReference type="ChEBI" id="CHEBI:37565"/>
    </ligand>
</feature>
<feature type="binding site" evidence="1">
    <location>
        <begin position="282"/>
        <end position="285"/>
    </location>
    <ligand>
        <name>GTP</name>
        <dbReference type="ChEBI" id="CHEBI:37565"/>
    </ligand>
</feature>
<feature type="binding site" evidence="1">
    <location>
        <begin position="314"/>
        <end position="316"/>
    </location>
    <ligand>
        <name>GTP</name>
        <dbReference type="ChEBI" id="CHEBI:37565"/>
    </ligand>
</feature>
<reference key="1">
    <citation type="journal article" date="2002" name="Nat. Genet.">
        <title>Genome sequence of the endocellular obligate symbiont of tsetse flies, Wigglesworthia glossinidia.</title>
        <authorList>
            <person name="Akman L."/>
            <person name="Yamashita A."/>
            <person name="Watanabe H."/>
            <person name="Oshima K."/>
            <person name="Shiba T."/>
            <person name="Hattori M."/>
            <person name="Aksoy S."/>
        </authorList>
    </citation>
    <scope>NUCLEOTIDE SEQUENCE [LARGE SCALE GENOMIC DNA]</scope>
</reference>
<accession>Q8D279</accession>
<comment type="function">
    <text evidence="1">An essential GTPase which binds GTP, GDP and possibly (p)ppGpp with moderate affinity, with high nucleotide exchange rates and a fairly low GTP hydrolysis rate. Plays a role in control of the cell cycle, stress response, ribosome biogenesis and in those bacteria that undergo differentiation, in morphogenesis control.</text>
</comment>
<comment type="cofactor">
    <cofactor evidence="1">
        <name>Mg(2+)</name>
        <dbReference type="ChEBI" id="CHEBI:18420"/>
    </cofactor>
</comment>
<comment type="subunit">
    <text evidence="1">Monomer.</text>
</comment>
<comment type="subcellular location">
    <subcellularLocation>
        <location evidence="1">Cytoplasm</location>
    </subcellularLocation>
</comment>
<comment type="similarity">
    <text evidence="1">Belongs to the TRAFAC class OBG-HflX-like GTPase superfamily. OBG GTPase family.</text>
</comment>
<keyword id="KW-0963">Cytoplasm</keyword>
<keyword id="KW-0342">GTP-binding</keyword>
<keyword id="KW-0378">Hydrolase</keyword>
<keyword id="KW-0460">Magnesium</keyword>
<keyword id="KW-0479">Metal-binding</keyword>
<keyword id="KW-0547">Nucleotide-binding</keyword>
<keyword id="KW-1185">Reference proteome</keyword>
<evidence type="ECO:0000255" key="1">
    <source>
        <dbReference type="HAMAP-Rule" id="MF_01454"/>
    </source>
</evidence>
<evidence type="ECO:0000255" key="2">
    <source>
        <dbReference type="PROSITE-ProRule" id="PRU01231"/>
    </source>
</evidence>
<dbReference type="EC" id="3.6.5.-" evidence="1"/>
<dbReference type="EMBL" id="BA000021">
    <property type="protein sequence ID" value="BAC24621.1"/>
    <property type="molecule type" value="Genomic_DNA"/>
</dbReference>
<dbReference type="SMR" id="Q8D279"/>
<dbReference type="STRING" id="36870.gene:10368979"/>
<dbReference type="KEGG" id="wbr:yhbZ"/>
<dbReference type="eggNOG" id="COG0536">
    <property type="taxonomic scope" value="Bacteria"/>
</dbReference>
<dbReference type="HOGENOM" id="CLU_011747_2_0_6"/>
<dbReference type="OrthoDB" id="9807318at2"/>
<dbReference type="Proteomes" id="UP000000562">
    <property type="component" value="Chromosome"/>
</dbReference>
<dbReference type="GO" id="GO:0005737">
    <property type="term" value="C:cytoplasm"/>
    <property type="evidence" value="ECO:0007669"/>
    <property type="project" value="UniProtKB-SubCell"/>
</dbReference>
<dbReference type="GO" id="GO:0005525">
    <property type="term" value="F:GTP binding"/>
    <property type="evidence" value="ECO:0007669"/>
    <property type="project" value="UniProtKB-UniRule"/>
</dbReference>
<dbReference type="GO" id="GO:0003924">
    <property type="term" value="F:GTPase activity"/>
    <property type="evidence" value="ECO:0007669"/>
    <property type="project" value="UniProtKB-UniRule"/>
</dbReference>
<dbReference type="GO" id="GO:0000287">
    <property type="term" value="F:magnesium ion binding"/>
    <property type="evidence" value="ECO:0007669"/>
    <property type="project" value="InterPro"/>
</dbReference>
<dbReference type="GO" id="GO:0042254">
    <property type="term" value="P:ribosome biogenesis"/>
    <property type="evidence" value="ECO:0007669"/>
    <property type="project" value="UniProtKB-UniRule"/>
</dbReference>
<dbReference type="CDD" id="cd01898">
    <property type="entry name" value="Obg"/>
    <property type="match status" value="1"/>
</dbReference>
<dbReference type="FunFam" id="2.70.210.12:FF:000001">
    <property type="entry name" value="GTPase Obg"/>
    <property type="match status" value="1"/>
</dbReference>
<dbReference type="Gene3D" id="2.70.210.12">
    <property type="entry name" value="GTP1/OBG domain"/>
    <property type="match status" value="1"/>
</dbReference>
<dbReference type="Gene3D" id="3.40.50.300">
    <property type="entry name" value="P-loop containing nucleotide triphosphate hydrolases"/>
    <property type="match status" value="1"/>
</dbReference>
<dbReference type="HAMAP" id="MF_01454">
    <property type="entry name" value="GTPase_Obg"/>
    <property type="match status" value="1"/>
</dbReference>
<dbReference type="InterPro" id="IPR031167">
    <property type="entry name" value="G_OBG"/>
</dbReference>
<dbReference type="InterPro" id="IPR006073">
    <property type="entry name" value="GTP-bd"/>
</dbReference>
<dbReference type="InterPro" id="IPR014100">
    <property type="entry name" value="GTP-bd_Obg/CgtA"/>
</dbReference>
<dbReference type="InterPro" id="IPR006169">
    <property type="entry name" value="GTP1_OBG_dom"/>
</dbReference>
<dbReference type="InterPro" id="IPR036726">
    <property type="entry name" value="GTP1_OBG_dom_sf"/>
</dbReference>
<dbReference type="InterPro" id="IPR045086">
    <property type="entry name" value="OBG_GTPase"/>
</dbReference>
<dbReference type="InterPro" id="IPR027417">
    <property type="entry name" value="P-loop_NTPase"/>
</dbReference>
<dbReference type="NCBIfam" id="TIGR02729">
    <property type="entry name" value="Obg_CgtA"/>
    <property type="match status" value="1"/>
</dbReference>
<dbReference type="NCBIfam" id="NF008956">
    <property type="entry name" value="PRK12299.1"/>
    <property type="match status" value="1"/>
</dbReference>
<dbReference type="PANTHER" id="PTHR11702">
    <property type="entry name" value="DEVELOPMENTALLY REGULATED GTP-BINDING PROTEIN-RELATED"/>
    <property type="match status" value="1"/>
</dbReference>
<dbReference type="PANTHER" id="PTHR11702:SF31">
    <property type="entry name" value="MITOCHONDRIAL RIBOSOME-ASSOCIATED GTPASE 2"/>
    <property type="match status" value="1"/>
</dbReference>
<dbReference type="Pfam" id="PF01018">
    <property type="entry name" value="GTP1_OBG"/>
    <property type="match status" value="1"/>
</dbReference>
<dbReference type="Pfam" id="PF01926">
    <property type="entry name" value="MMR_HSR1"/>
    <property type="match status" value="1"/>
</dbReference>
<dbReference type="PIRSF" id="PIRSF002401">
    <property type="entry name" value="GTP_bd_Obg/CgtA"/>
    <property type="match status" value="1"/>
</dbReference>
<dbReference type="PRINTS" id="PR00326">
    <property type="entry name" value="GTP1OBG"/>
</dbReference>
<dbReference type="SUPFAM" id="SSF82051">
    <property type="entry name" value="Obg GTP-binding protein N-terminal domain"/>
    <property type="match status" value="1"/>
</dbReference>
<dbReference type="SUPFAM" id="SSF52540">
    <property type="entry name" value="P-loop containing nucleoside triphosphate hydrolases"/>
    <property type="match status" value="1"/>
</dbReference>
<dbReference type="PROSITE" id="PS51710">
    <property type="entry name" value="G_OBG"/>
    <property type="match status" value="1"/>
</dbReference>
<dbReference type="PROSITE" id="PS51883">
    <property type="entry name" value="OBG"/>
    <property type="match status" value="1"/>
</dbReference>
<sequence>MNLTDNAVIFVKGGNGGKGCVSFRREKYIPKGGPDGGNGGNGGNVWIYSDKNTHDLYHCLVRKNFIAEDGENGKKNNSSGKNGKDVIIKVPIGTNIFFIKNSENIIFGHTRFHNQKFLVAKGGVRGLGNNYFKSPTNRTPMESTLGKLGESFKIKLDFVFLADVGLFGYSNTGRSCFMRSISNVKPKISFYPFTTLFPYIGSLNFLNKDIKFVDIPSFIEGKKKNNLRNRFLKHLQNCRLLLHFINLDVKNVKKTINKEKINIKILKSFRNLFLKPIWLIINKTDININSNIFFKQAQFVSNSLGYEKKFFFISLNDFISIKILINKILLFLEENKR</sequence>
<organism>
    <name type="scientific">Wigglesworthia glossinidia brevipalpis</name>
    <dbReference type="NCBI Taxonomy" id="36870"/>
    <lineage>
        <taxon>Bacteria</taxon>
        <taxon>Pseudomonadati</taxon>
        <taxon>Pseudomonadota</taxon>
        <taxon>Gammaproteobacteria</taxon>
        <taxon>Enterobacterales</taxon>
        <taxon>Erwiniaceae</taxon>
        <taxon>Wigglesworthia</taxon>
    </lineage>
</organism>
<gene>
    <name evidence="1" type="primary">obg</name>
    <name type="ordered locus">WIGBR4750</name>
</gene>
<protein>
    <recommendedName>
        <fullName evidence="1">GTPase Obg</fullName>
        <ecNumber evidence="1">3.6.5.-</ecNumber>
    </recommendedName>
    <alternativeName>
        <fullName evidence="1">GTP-binding protein Obg</fullName>
    </alternativeName>
</protein>